<name>KCC2D_MOUSE</name>
<protein>
    <recommendedName>
        <fullName>Calcium/calmodulin-dependent protein kinase type II subunit delta</fullName>
        <shortName>CaM kinase II subunit delta</shortName>
        <shortName>CaMK-II subunit delta</shortName>
        <ecNumber evidence="6">2.7.11.17</ecNumber>
    </recommendedName>
</protein>
<feature type="initiator methionine" description="Removed" evidence="2">
    <location>
        <position position="1"/>
    </location>
</feature>
<feature type="chain" id="PRO_0000277817" description="Calcium/calmodulin-dependent protein kinase type II subunit delta">
    <location>
        <begin position="2"/>
        <end position="499"/>
    </location>
</feature>
<feature type="domain" description="Protein kinase" evidence="3">
    <location>
        <begin position="14"/>
        <end position="272"/>
    </location>
</feature>
<feature type="region of interest" description="Autoinhibitory domain" evidence="1">
    <location>
        <begin position="283"/>
        <end position="292"/>
    </location>
</feature>
<feature type="region of interest" description="Calmodulin-binding" evidence="1">
    <location>
        <begin position="291"/>
        <end position="301"/>
    </location>
</feature>
<feature type="active site" description="Proton acceptor" evidence="3 4">
    <location>
        <position position="136"/>
    </location>
</feature>
<feature type="binding site" evidence="3">
    <location>
        <begin position="20"/>
        <end position="28"/>
    </location>
    <ligand>
        <name>ATP</name>
        <dbReference type="ChEBI" id="CHEBI:30616"/>
    </ligand>
</feature>
<feature type="binding site" evidence="3">
    <location>
        <position position="43"/>
    </location>
    <ligand>
        <name>ATP</name>
        <dbReference type="ChEBI" id="CHEBI:30616"/>
    </ligand>
</feature>
<feature type="modified residue" description="N-acetylalanine" evidence="2">
    <location>
        <position position="2"/>
    </location>
</feature>
<feature type="modified residue" description="Phosphothreonine; by autocatalysis" evidence="2 16">
    <location>
        <position position="287"/>
    </location>
</feature>
<feature type="modified residue" description="Phosphothreonine; by autocatalysis" evidence="1">
    <location>
        <position position="306"/>
    </location>
</feature>
<feature type="modified residue" description="Phosphothreonine; by autocatalysis" evidence="1">
    <location>
        <position position="307"/>
    </location>
</feature>
<feature type="modified residue" description="Phosphoserine" evidence="2">
    <location>
        <position position="315"/>
    </location>
</feature>
<feature type="modified residue" description="N6-acetyllysine" evidence="19">
    <location>
        <position position="318"/>
    </location>
</feature>
<feature type="modified residue" description="Phosphoserine" evidence="2">
    <location>
        <position position="319"/>
    </location>
</feature>
<feature type="modified residue" description="Phosphoserine" evidence="17">
    <location>
        <position position="330"/>
    </location>
</feature>
<feature type="modified residue" description="Phosphothreonine" evidence="2">
    <location>
        <position position="331"/>
    </location>
</feature>
<feature type="modified residue" description="Phosphoserine" evidence="18">
    <location>
        <position position="333"/>
    </location>
</feature>
<feature type="modified residue" description="Phosphothreonine" evidence="18">
    <location>
        <position position="336"/>
    </location>
</feature>
<feature type="modified residue" description="Phosphothreonine" evidence="17 18">
    <location>
        <position position="337"/>
    </location>
</feature>
<feature type="modified residue" description="Phosphoserine" evidence="2">
    <location>
        <position position="404"/>
    </location>
</feature>
<feature type="modified residue" description="Phosphoserine" evidence="2">
    <location>
        <position position="490"/>
    </location>
</feature>
<feature type="modified residue" description="Phosphoserine" evidence="18">
    <location>
        <position position="494"/>
    </location>
</feature>
<feature type="splice variant" id="VSP_023100" description="In isoform 4." evidence="14 15">
    <original>K</original>
    <variation>KINNKANVVTSPKENIPTPALEPQTTVIHNPDGNK</variation>
    <location>
        <position position="328"/>
    </location>
</feature>
<feature type="splice variant" id="VSP_023101" description="In isoform 3." evidence="14">
    <original>E</original>
    <variation>EPQTTVIHNPDGNKE</variation>
    <location>
        <position position="329"/>
    </location>
</feature>
<feature type="splice variant" id="VSP_023103" description="In isoform 2, isoform 3 and isoform 4." evidence="14 15">
    <original>K</original>
    <variation>N</variation>
    <location>
        <position position="478"/>
    </location>
</feature>
<feature type="splice variant" id="VSP_023102" description="In isoform 2, isoform 3 and isoform 4." evidence="14 15">
    <location>
        <begin position="479"/>
        <end position="499"/>
    </location>
</feature>
<feature type="sequence conflict" description="In Ref. 1; BAC30232." evidence="16" ref="1">
    <original>SVN</original>
    <variation>AVL</variation>
    <location>
        <begin position="123"/>
        <end position="125"/>
    </location>
</feature>
<feature type="sequence conflict" description="In Ref. 1; BAC30232." evidence="16" ref="1">
    <original>LNGI</original>
    <variation>QMGV</variation>
    <location>
        <begin position="129"/>
        <end position="132"/>
    </location>
</feature>
<feature type="sequence conflict" description="In Ref. 1; BAC30232." evidence="16" ref="1">
    <original>A</original>
    <variation>V</variation>
    <location>
        <position position="199"/>
    </location>
</feature>
<feature type="strand" evidence="20">
    <location>
        <begin position="13"/>
        <end position="23"/>
    </location>
</feature>
<feature type="strand" evidence="20">
    <location>
        <begin position="26"/>
        <end position="33"/>
    </location>
</feature>
<feature type="turn" evidence="20">
    <location>
        <begin position="34"/>
        <end position="37"/>
    </location>
</feature>
<feature type="strand" evidence="20">
    <location>
        <begin position="38"/>
        <end position="46"/>
    </location>
</feature>
<feature type="helix" evidence="20">
    <location>
        <begin position="54"/>
        <end position="67"/>
    </location>
</feature>
<feature type="strand" evidence="20">
    <location>
        <begin position="76"/>
        <end position="81"/>
    </location>
</feature>
<feature type="strand" evidence="20">
    <location>
        <begin position="83"/>
        <end position="91"/>
    </location>
</feature>
<feature type="helix" evidence="20">
    <location>
        <begin position="98"/>
        <end position="102"/>
    </location>
</feature>
<feature type="helix" evidence="20">
    <location>
        <begin position="110"/>
        <end position="129"/>
    </location>
</feature>
<feature type="helix" evidence="20">
    <location>
        <begin position="139"/>
        <end position="141"/>
    </location>
</feature>
<feature type="strand" evidence="20">
    <location>
        <begin position="142"/>
        <end position="144"/>
    </location>
</feature>
<feature type="helix" evidence="20">
    <location>
        <begin position="147"/>
        <end position="149"/>
    </location>
</feature>
<feature type="strand" evidence="20">
    <location>
        <begin position="153"/>
        <end position="155"/>
    </location>
</feature>
<feature type="helix" evidence="20">
    <location>
        <begin position="178"/>
        <end position="180"/>
    </location>
</feature>
<feature type="helix" evidence="20">
    <location>
        <begin position="183"/>
        <end position="186"/>
    </location>
</feature>
<feature type="helix" evidence="20">
    <location>
        <begin position="194"/>
        <end position="209"/>
    </location>
</feature>
<feature type="helix" evidence="20">
    <location>
        <begin position="219"/>
        <end position="228"/>
    </location>
</feature>
<feature type="helix" evidence="20">
    <location>
        <begin position="237"/>
        <end position="240"/>
    </location>
</feature>
<feature type="helix" evidence="20">
    <location>
        <begin position="243"/>
        <end position="252"/>
    </location>
</feature>
<feature type="turn" evidence="20">
    <location>
        <begin position="257"/>
        <end position="259"/>
    </location>
</feature>
<feature type="helix" evidence="20">
    <location>
        <begin position="263"/>
        <end position="266"/>
    </location>
</feature>
<feature type="helix" evidence="20">
    <location>
        <begin position="270"/>
        <end position="273"/>
    </location>
</feature>
<feature type="helix" evidence="20">
    <location>
        <begin position="275"/>
        <end position="278"/>
    </location>
</feature>
<feature type="helix" evidence="20">
    <location>
        <begin position="285"/>
        <end position="299"/>
    </location>
</feature>
<feature type="sequence conflict" description="In Ref. 1; BAE25062." evidence="16" ref="1">
    <original>N</original>
    <variation>K</variation>
    <location sequence="Q6PHZ2-2">
        <position position="478"/>
    </location>
</feature>
<sequence length="499" mass="56369">MASTTTCTRFTDEYQLFEELGKGAFSVVRRCMKIPTGQEYAAKIINTKKLSARDHQKLEREARICRLLKHPNIVRLHDSISEEGFHYLVFDLVTGGELFEDIVAREYYSEADASHCIQQILESVNHCHLNGIVHRDLKPENLLLASKSKGAAVKLADFGLAIEVQGDQQAWFGFAGTPGYLSPEVLRKDPYGKPVDMWACGVILYILLVGYPPFWDEDQHRLYQQIKAGAYDFPSPEWDTVTPEAKDLINKMLTINPAKRITASEALKHPWICQRSTVASMMHRQETVDCLKKFNARRKLKGAILTTMLATRNFSAAKSLLKKPDGVKESTESSNTTIEDEDVKARKQEIIKVTEQLIEAINNGDFEAYTKICDPGLTAFEPEALGNLVEGMDFHRFYFENALSKSNKPIHTIILNPHVHLVGDDAACIAYIRLTQYMDGSGMPKTMQSEETRVWHRRDGKWQNVHFHRSGSPTVPIKPPCIPNGKENFSGGTSLWQNI</sequence>
<accession>Q6PHZ2</accession>
<accession>Q3UF87</accession>
<accession>Q3UQH9</accession>
<accession>Q5DTK4</accession>
<accession>Q8CAC5</accession>
<accession>Q9CZE2</accession>
<keyword id="KW-0002">3D-structure</keyword>
<keyword id="KW-0007">Acetylation</keyword>
<keyword id="KW-0025">Alternative splicing</keyword>
<keyword id="KW-0067">ATP-binding</keyword>
<keyword id="KW-0112">Calmodulin-binding</keyword>
<keyword id="KW-1003">Cell membrane</keyword>
<keyword id="KW-0418">Kinase</keyword>
<keyword id="KW-0472">Membrane</keyword>
<keyword id="KW-0547">Nucleotide-binding</keyword>
<keyword id="KW-0597">Phosphoprotein</keyword>
<keyword id="KW-1185">Reference proteome</keyword>
<keyword id="KW-0703">Sarcoplasmic reticulum</keyword>
<keyword id="KW-0723">Serine/threonine-protein kinase</keyword>
<keyword id="KW-0808">Transferase</keyword>
<comment type="function">
    <text evidence="6 7 8 9 10 11 12 13">Calcium/calmodulin-dependent protein kinase involved in the regulation of Ca(2+) homeostatis and excitation-contraction coupling (ECC) in heart by targeting ion channels, transporters and accessory proteins involved in Ca(2+) influx into the myocyte, Ca(2+) release from the sarcoplasmic reticulum (SR), SR Ca(2+) uptake and Na(+) and K(+) channel transport (PubMed:12676814, PubMed:15456698, PubMed:17124532). Targets also transcription factors and signaling molecules to regulate heart function. In its activated form, is involved in the pathogenesis of dilated cardiomyopathy and heart failure (PubMed:12676814, PubMed:19179290, PubMed:19381018). Contributes to cardiac decompensation and heart failure by regulating SR Ca(2+) release via direct phosphorylation of RYR2 Ca(2+) channel on 'Ser-2808' (PubMed:20194790). In the nucleus, phosphorylates the MEF2 repressor HDAC4, promoting its nuclear export and binding to 14-3-3 protein, and expression of MEF2 and genes involved in the hypertrophic program. Is essential for left ventricular remodeling responses to myocardial infarction (PubMed:15793582). In pathological myocardial remodeling acts downstream of the beta adrenergic receptor signaling cascade to regulate key proteins involved in ECC. Regulates Ca(2+) influx to myocytes by binding and phosphorylating the L-type Ca(2+) channel subunit beta-2 CACNB2. In addition to Ca(2+) channels, can target and regulate the cardiac sarcolemmal Na(+) channel Nav1.5/SCN5A and the K+ channel Kv4.3/KCND3, which contribute to arrhythmogenesis in heart failure (PubMed:17124532). Phosphorylates phospholamban (PLN/PLB), an endogenous inhibitor of SERCA2A/ATP2A2, contributing to the enhancement of SR Ca(2+) uptake that may be important in frequency-dependent acceleration of relaxation (FDAR) and maintenance of contractile function during acidosis. May participate in the modulation of skeletal muscle function in response to exercise, by regulating SR Ca(2+) transport through phosphorylation of PLN/PLB and triadin, a ryanodine receptor-coupling factor. In response to interferon-gamma (IFN-gamma) stimulation, catalyzes phosphorylation of STAT1, stimulating the JAK-STAT signaling pathway (PubMed:11972023).</text>
</comment>
<comment type="catalytic activity">
    <reaction evidence="6">
        <text>L-seryl-[protein] + ATP = O-phospho-L-seryl-[protein] + ADP + H(+)</text>
        <dbReference type="Rhea" id="RHEA:17989"/>
        <dbReference type="Rhea" id="RHEA-COMP:9863"/>
        <dbReference type="Rhea" id="RHEA-COMP:11604"/>
        <dbReference type="ChEBI" id="CHEBI:15378"/>
        <dbReference type="ChEBI" id="CHEBI:29999"/>
        <dbReference type="ChEBI" id="CHEBI:30616"/>
        <dbReference type="ChEBI" id="CHEBI:83421"/>
        <dbReference type="ChEBI" id="CHEBI:456216"/>
        <dbReference type="EC" id="2.7.11.17"/>
    </reaction>
</comment>
<comment type="catalytic activity">
    <reaction>
        <text>L-threonyl-[protein] + ATP = O-phospho-L-threonyl-[protein] + ADP + H(+)</text>
        <dbReference type="Rhea" id="RHEA:46608"/>
        <dbReference type="Rhea" id="RHEA-COMP:11060"/>
        <dbReference type="Rhea" id="RHEA-COMP:11605"/>
        <dbReference type="ChEBI" id="CHEBI:15378"/>
        <dbReference type="ChEBI" id="CHEBI:30013"/>
        <dbReference type="ChEBI" id="CHEBI:30616"/>
        <dbReference type="ChEBI" id="CHEBI:61977"/>
        <dbReference type="ChEBI" id="CHEBI:456216"/>
        <dbReference type="EC" id="2.7.11.17"/>
    </reaction>
</comment>
<comment type="activity regulation">
    <text>Activated by Ca(2+)/calmodulin. Binding of calmodulin results in conformational change that relieves intrasteric autoinhibition and allows autophosphorylation of Thr-287 which turns the kinase in a constitutively active form and confers to the kinase a Ca(2+)-independent activity.</text>
</comment>
<comment type="subunit">
    <text evidence="1 13">CAMK2 is composed of 4 different chains: alpha (CAMK2A), beta (CAMK2B), gamma (CAMK2G), and delta (CAMK2D). The different isoforms assemble into homo- or heteromultimeric holoenzymes composed of 12 subunits with two hexameric rings stacked one on top of the other. Interacts with RRAD (By similarity). Interacts with CACNB2.</text>
</comment>
<comment type="interaction">
    <interactant intactId="EBI-2308458">
        <id>Q6PHZ2</id>
    </interactant>
    <interactant intactId="EBI-7996161">
        <id>Q9JJ28</id>
        <label>Flii</label>
    </interactant>
    <organismsDiffer>false</organismsDiffer>
    <experiments>5</experiments>
</comment>
<comment type="interaction">
    <interactant intactId="EBI-2308458">
        <id>Q6PHZ2</id>
    </interactant>
    <interactant intactId="EBI-643628">
        <id>E9Q401</id>
        <label>Ryr2</label>
    </interactant>
    <organismsDiffer>false</organismsDiffer>
    <experiments>2</experiments>
</comment>
<comment type="subcellular location">
    <subcellularLocation>
        <location evidence="16">Cell membrane</location>
        <location evidence="16">Sarcolemma</location>
        <topology evidence="16">Peripheral membrane protein</topology>
        <orientation evidence="16">Cytoplasmic side</orientation>
    </subcellularLocation>
    <subcellularLocation>
        <location evidence="16">Sarcoplasmic reticulum membrane</location>
        <topology evidence="16">Peripheral membrane protein</topology>
        <orientation evidence="16">Cytoplasmic side</orientation>
    </subcellularLocation>
</comment>
<comment type="alternative products">
    <event type="alternative splicing"/>
    <isoform>
        <id>Q6PHZ2-1</id>
        <name>1</name>
        <name>Delta 2</name>
        <sequence type="displayed"/>
    </isoform>
    <isoform>
        <id>Q6PHZ2-2</id>
        <name>2</name>
        <name>Delta 6</name>
        <sequence type="described" ref="VSP_023103 VSP_023102"/>
    </isoform>
    <isoform>
        <id>Q6PHZ2-4</id>
        <name>3</name>
        <name>Delta 10</name>
        <sequence type="described" ref="VSP_023101 VSP_023103 VSP_023102"/>
    </isoform>
    <isoform>
        <id>Q6PHZ2-5</id>
        <name>4</name>
        <name>Delta 5</name>
        <sequence type="described" ref="VSP_023100 VSP_023103 VSP_023102"/>
    </isoform>
</comment>
<comment type="tissue specificity">
    <text evidence="5">Expressed in cardiac muscle and skeletal muscle. Isoform Delta 2, isoform Delta 6, isoform Delta 6 and isoform Delta 10 are expressed in cardiac muscle. Isoform Delta 2 is expressed in skeletal muscle.</text>
</comment>
<comment type="domain">
    <text>The CAMK2 protein kinases contain a unique C-terminal subunit association domain responsible for oligomerization.</text>
</comment>
<comment type="PTM">
    <text evidence="1">Autophosphorylation of Thr-287 following activation by Ca(2+)/calmodulin. Phosphorylation of Thr-287 locks the kinase into an activated state (By similarity).</text>
</comment>
<comment type="miscellaneous">
    <text>Mice overexpressing CaMK2D develop a dilated cardiomyopathy, enlarged myocytes with reduced contractility and altered Ca(2+) handling, and die prematurely in PubMed:12676814.</text>
</comment>
<comment type="similarity">
    <text evidence="16">Belongs to the protein kinase superfamily. CAMK Ser/Thr protein kinase family. CaMK subfamily.</text>
</comment>
<comment type="sequence caution" evidence="16">
    <conflict type="erroneous initiation">
        <sequence resource="EMBL-CDS" id="BAD90304"/>
    </conflict>
    <text>Extended N-terminus.</text>
</comment>
<dbReference type="EC" id="2.7.11.17" evidence="6"/>
<dbReference type="EMBL" id="AK039076">
    <property type="protein sequence ID" value="BAC30232.1"/>
    <property type="molecule type" value="mRNA"/>
</dbReference>
<dbReference type="EMBL" id="AK012702">
    <property type="protein sequence ID" value="BAB28422.1"/>
    <property type="molecule type" value="mRNA"/>
</dbReference>
<dbReference type="EMBL" id="AK142435">
    <property type="protein sequence ID" value="BAE25062.1"/>
    <property type="molecule type" value="mRNA"/>
</dbReference>
<dbReference type="EMBL" id="AK148840">
    <property type="protein sequence ID" value="BAE28674.1"/>
    <property type="molecule type" value="mRNA"/>
</dbReference>
<dbReference type="EMBL" id="AK220516">
    <property type="protein sequence ID" value="BAD90304.1"/>
    <property type="status" value="ALT_INIT"/>
    <property type="molecule type" value="mRNA"/>
</dbReference>
<dbReference type="EMBL" id="BC052894">
    <property type="protein sequence ID" value="AAH52894.1"/>
    <property type="molecule type" value="mRNA"/>
</dbReference>
<dbReference type="CCDS" id="CCDS17823.1">
    <molecule id="Q6PHZ2-1"/>
</dbReference>
<dbReference type="CCDS" id="CCDS51065.1">
    <molecule id="Q6PHZ2-2"/>
</dbReference>
<dbReference type="CCDS" id="CCDS80015.1">
    <molecule id="Q6PHZ2-5"/>
</dbReference>
<dbReference type="CCDS" id="CCDS80016.1">
    <molecule id="Q6PHZ2-4"/>
</dbReference>
<dbReference type="RefSeq" id="NP_001020609.1">
    <molecule id="Q6PHZ2-1"/>
    <property type="nucleotide sequence ID" value="NM_001025438.2"/>
</dbReference>
<dbReference type="RefSeq" id="NP_001020610.1">
    <property type="nucleotide sequence ID" value="NM_001025439.2"/>
</dbReference>
<dbReference type="RefSeq" id="NP_001280592.1">
    <molecule id="Q6PHZ2-5"/>
    <property type="nucleotide sequence ID" value="NM_001293663.1"/>
</dbReference>
<dbReference type="RefSeq" id="NP_001280593.1">
    <molecule id="Q6PHZ2-4"/>
    <property type="nucleotide sequence ID" value="NM_001293664.1"/>
</dbReference>
<dbReference type="RefSeq" id="NP_076302.1">
    <molecule id="Q6PHZ2-2"/>
    <property type="nucleotide sequence ID" value="NM_023813.4"/>
</dbReference>
<dbReference type="PDB" id="6BAB">
    <property type="method" value="X-ray"/>
    <property type="resolution" value="1.91 A"/>
    <property type="chains" value="A/B/C/D=3-301"/>
</dbReference>
<dbReference type="PDBsum" id="6BAB"/>
<dbReference type="SMR" id="Q6PHZ2"/>
<dbReference type="BioGRID" id="223798">
    <property type="interactions" value="27"/>
</dbReference>
<dbReference type="DIP" id="DIP-47638N"/>
<dbReference type="FunCoup" id="Q6PHZ2">
    <property type="interactions" value="3007"/>
</dbReference>
<dbReference type="IntAct" id="Q6PHZ2">
    <property type="interactions" value="26"/>
</dbReference>
<dbReference type="MINT" id="Q6PHZ2"/>
<dbReference type="STRING" id="10090.ENSMUSP00000143677"/>
<dbReference type="GlyGen" id="Q6PHZ2">
    <property type="glycosylation" value="4 sites, 1 O-linked glycan (3 sites)"/>
</dbReference>
<dbReference type="iPTMnet" id="Q6PHZ2"/>
<dbReference type="MetOSite" id="Q6PHZ2"/>
<dbReference type="PhosphoSitePlus" id="Q6PHZ2"/>
<dbReference type="SwissPalm" id="Q6PHZ2"/>
<dbReference type="jPOST" id="Q6PHZ2"/>
<dbReference type="PaxDb" id="10090-ENSMUSP00000102009"/>
<dbReference type="PeptideAtlas" id="Q6PHZ2"/>
<dbReference type="ProteomicsDB" id="269245">
    <molecule id="Q6PHZ2-1"/>
</dbReference>
<dbReference type="ProteomicsDB" id="269246">
    <molecule id="Q6PHZ2-2"/>
</dbReference>
<dbReference type="ProteomicsDB" id="269247">
    <molecule id="Q6PHZ2-4"/>
</dbReference>
<dbReference type="ProteomicsDB" id="269248">
    <molecule id="Q6PHZ2-5"/>
</dbReference>
<dbReference type="Pumba" id="Q6PHZ2"/>
<dbReference type="DNASU" id="108058"/>
<dbReference type="Ensembl" id="ENSMUST00000066466.13">
    <molecule id="Q6PHZ2-4"/>
    <property type="protein sequence ID" value="ENSMUSP00000063359.8"/>
    <property type="gene ID" value="ENSMUSG00000053819.17"/>
</dbReference>
<dbReference type="Ensembl" id="ENSMUST00000106400.9">
    <molecule id="Q6PHZ2-2"/>
    <property type="protein sequence ID" value="ENSMUSP00000102008.3"/>
    <property type="gene ID" value="ENSMUSG00000053819.17"/>
</dbReference>
<dbReference type="Ensembl" id="ENSMUST00000106402.8">
    <molecule id="Q6PHZ2-5"/>
    <property type="protein sequence ID" value="ENSMUSP00000102010.2"/>
    <property type="gene ID" value="ENSMUSG00000053819.17"/>
</dbReference>
<dbReference type="Ensembl" id="ENSMUST00000199300.5">
    <molecule id="Q6PHZ2-1"/>
    <property type="protein sequence ID" value="ENSMUSP00000143504.2"/>
    <property type="gene ID" value="ENSMUSG00000053819.17"/>
</dbReference>
<dbReference type="GeneID" id="108058"/>
<dbReference type="KEGG" id="mmu:108058"/>
<dbReference type="UCSC" id="uc008rgh.2">
    <molecule id="Q6PHZ2-1"/>
    <property type="organism name" value="mouse"/>
</dbReference>
<dbReference type="UCSC" id="uc008rgl.2">
    <molecule id="Q6PHZ2-2"/>
    <property type="organism name" value="mouse"/>
</dbReference>
<dbReference type="UCSC" id="uc008rgn.2">
    <molecule id="Q6PHZ2-5"/>
    <property type="organism name" value="mouse"/>
</dbReference>
<dbReference type="UCSC" id="uc008rgo.2">
    <molecule id="Q6PHZ2-4"/>
    <property type="organism name" value="mouse"/>
</dbReference>
<dbReference type="AGR" id="MGI:1341265"/>
<dbReference type="CTD" id="817"/>
<dbReference type="MGI" id="MGI:1341265">
    <property type="gene designation" value="Camk2d"/>
</dbReference>
<dbReference type="VEuPathDB" id="HostDB:ENSMUSG00000053819"/>
<dbReference type="eggNOG" id="KOG0033">
    <property type="taxonomic scope" value="Eukaryota"/>
</dbReference>
<dbReference type="GeneTree" id="ENSGT00940000159769"/>
<dbReference type="InParanoid" id="Q6PHZ2"/>
<dbReference type="OrthoDB" id="336747at2759"/>
<dbReference type="PhylomeDB" id="Q6PHZ2"/>
<dbReference type="BRENDA" id="2.7.11.17">
    <property type="organism ID" value="3474"/>
</dbReference>
<dbReference type="Reactome" id="R-MMU-3371571">
    <property type="pathway name" value="HSF1-dependent transactivation"/>
</dbReference>
<dbReference type="Reactome" id="R-MMU-399719">
    <property type="pathway name" value="Trafficking of AMPA receptors"/>
</dbReference>
<dbReference type="Reactome" id="R-MMU-438066">
    <property type="pathway name" value="Unblocking of NMDA receptors, glutamate binding and activation"/>
</dbReference>
<dbReference type="Reactome" id="R-MMU-5578775">
    <property type="pathway name" value="Ion homeostasis"/>
</dbReference>
<dbReference type="Reactome" id="R-MMU-5673000">
    <property type="pathway name" value="RAF activation"/>
</dbReference>
<dbReference type="Reactome" id="R-MMU-5673001">
    <property type="pathway name" value="RAF/MAP kinase cascade"/>
</dbReference>
<dbReference type="Reactome" id="R-MMU-877300">
    <property type="pathway name" value="Interferon gamma signaling"/>
</dbReference>
<dbReference type="Reactome" id="R-MMU-936837">
    <property type="pathway name" value="Ion transport by P-type ATPases"/>
</dbReference>
<dbReference type="BioGRID-ORCS" id="108058">
    <property type="hits" value="1 hit in 80 CRISPR screens"/>
</dbReference>
<dbReference type="CD-CODE" id="CE726F99">
    <property type="entry name" value="Postsynaptic density"/>
</dbReference>
<dbReference type="ChiTaRS" id="Camk2d">
    <property type="organism name" value="mouse"/>
</dbReference>
<dbReference type="PRO" id="PR:Q6PHZ2"/>
<dbReference type="Proteomes" id="UP000000589">
    <property type="component" value="Chromosome 3"/>
</dbReference>
<dbReference type="RNAct" id="Q6PHZ2">
    <property type="molecule type" value="protein"/>
</dbReference>
<dbReference type="Bgee" id="ENSMUSG00000053819">
    <property type="expression patterns" value="Expressed in anterior amygdaloid area and 252 other cell types or tissues"/>
</dbReference>
<dbReference type="ExpressionAtlas" id="Q6PHZ2">
    <property type="expression patterns" value="baseline and differential"/>
</dbReference>
<dbReference type="GO" id="GO:0043194">
    <property type="term" value="C:axon initial segment"/>
    <property type="evidence" value="ECO:0000314"/>
    <property type="project" value="MGI"/>
</dbReference>
<dbReference type="GO" id="GO:0098683">
    <property type="term" value="C:cochlear hair cell ribbon synapse"/>
    <property type="evidence" value="ECO:0000314"/>
    <property type="project" value="SynGO"/>
</dbReference>
<dbReference type="GO" id="GO:0005737">
    <property type="term" value="C:cytoplasm"/>
    <property type="evidence" value="ECO:0000314"/>
    <property type="project" value="MGI"/>
</dbReference>
<dbReference type="GO" id="GO:0014704">
    <property type="term" value="C:intercalated disc"/>
    <property type="evidence" value="ECO:0000314"/>
    <property type="project" value="MGI"/>
</dbReference>
<dbReference type="GO" id="GO:0031594">
    <property type="term" value="C:neuromuscular junction"/>
    <property type="evidence" value="ECO:0000314"/>
    <property type="project" value="MGI"/>
</dbReference>
<dbReference type="GO" id="GO:0043025">
    <property type="term" value="C:neuronal cell body"/>
    <property type="evidence" value="ECO:0000314"/>
    <property type="project" value="MGI"/>
</dbReference>
<dbReference type="GO" id="GO:0005634">
    <property type="term" value="C:nucleus"/>
    <property type="evidence" value="ECO:0000314"/>
    <property type="project" value="MGI"/>
</dbReference>
<dbReference type="GO" id="GO:0099524">
    <property type="term" value="C:postsynaptic cytosol"/>
    <property type="evidence" value="ECO:0000314"/>
    <property type="project" value="SynGO"/>
</dbReference>
<dbReference type="GO" id="GO:0016529">
    <property type="term" value="C:sarcoplasmic reticulum"/>
    <property type="evidence" value="ECO:0000314"/>
    <property type="project" value="MGI"/>
</dbReference>
<dbReference type="GO" id="GO:0033017">
    <property type="term" value="C:sarcoplasmic reticulum membrane"/>
    <property type="evidence" value="ECO:0007669"/>
    <property type="project" value="UniProtKB-SubCell"/>
</dbReference>
<dbReference type="GO" id="GO:0030315">
    <property type="term" value="C:T-tubule"/>
    <property type="evidence" value="ECO:0000314"/>
    <property type="project" value="MGI"/>
</dbReference>
<dbReference type="GO" id="GO:0005524">
    <property type="term" value="F:ATP binding"/>
    <property type="evidence" value="ECO:0007669"/>
    <property type="project" value="UniProtKB-KW"/>
</dbReference>
<dbReference type="GO" id="GO:0004683">
    <property type="term" value="F:calcium/calmodulin-dependent protein kinase activity"/>
    <property type="evidence" value="ECO:0000314"/>
    <property type="project" value="UniProtKB"/>
</dbReference>
<dbReference type="GO" id="GO:0005516">
    <property type="term" value="F:calmodulin binding"/>
    <property type="evidence" value="ECO:0007669"/>
    <property type="project" value="UniProtKB-KW"/>
</dbReference>
<dbReference type="GO" id="GO:0106310">
    <property type="term" value="F:protein serine kinase activity"/>
    <property type="evidence" value="ECO:0007669"/>
    <property type="project" value="RHEA"/>
</dbReference>
<dbReference type="GO" id="GO:0004674">
    <property type="term" value="F:protein serine/threonine kinase activity"/>
    <property type="evidence" value="ECO:0000314"/>
    <property type="project" value="MGI"/>
</dbReference>
<dbReference type="GO" id="GO:0044325">
    <property type="term" value="F:transmembrane transporter binding"/>
    <property type="evidence" value="ECO:0000353"/>
    <property type="project" value="BHF-UCL"/>
</dbReference>
<dbReference type="GO" id="GO:0006816">
    <property type="term" value="P:calcium ion transport"/>
    <property type="evidence" value="ECO:0000314"/>
    <property type="project" value="MGI"/>
</dbReference>
<dbReference type="GO" id="GO:0086003">
    <property type="term" value="P:cardiac muscle cell contraction"/>
    <property type="evidence" value="ECO:0000250"/>
    <property type="project" value="BHF-UCL"/>
</dbReference>
<dbReference type="GO" id="GO:0060048">
    <property type="term" value="P:cardiac muscle contraction"/>
    <property type="evidence" value="ECO:0000314"/>
    <property type="project" value="MGI"/>
</dbReference>
<dbReference type="GO" id="GO:0000082">
    <property type="term" value="P:G1/S transition of mitotic cell cycle"/>
    <property type="evidence" value="ECO:0000315"/>
    <property type="project" value="MGI"/>
</dbReference>
<dbReference type="GO" id="GO:0010613">
    <property type="term" value="P:positive regulation of cardiac muscle hypertrophy"/>
    <property type="evidence" value="ECO:0000250"/>
    <property type="project" value="UniProtKB"/>
</dbReference>
<dbReference type="GO" id="GO:0006468">
    <property type="term" value="P:protein phosphorylation"/>
    <property type="evidence" value="ECO:0000250"/>
    <property type="project" value="UniProtKB"/>
</dbReference>
<dbReference type="GO" id="GO:0060341">
    <property type="term" value="P:regulation of cellular localization"/>
    <property type="evidence" value="ECO:0000250"/>
    <property type="project" value="UniProtKB"/>
</dbReference>
<dbReference type="GO" id="GO:1901897">
    <property type="term" value="P:regulation of relaxation of cardiac muscle"/>
    <property type="evidence" value="ECO:0000316"/>
    <property type="project" value="BHF-UCL"/>
</dbReference>
<dbReference type="GO" id="GO:0002028">
    <property type="term" value="P:regulation of sodium ion transport"/>
    <property type="evidence" value="ECO:0000314"/>
    <property type="project" value="MGI"/>
</dbReference>
<dbReference type="GO" id="GO:0055119">
    <property type="term" value="P:relaxation of cardiac muscle"/>
    <property type="evidence" value="ECO:0000250"/>
    <property type="project" value="BHF-UCL"/>
</dbReference>
<dbReference type="CDD" id="cd14086">
    <property type="entry name" value="STKc_CaMKII"/>
    <property type="match status" value="1"/>
</dbReference>
<dbReference type="FunFam" id="1.10.510.10:FF:000001">
    <property type="entry name" value="Calcium/calmodulin-dependent protein kinase type II subunit delta"/>
    <property type="match status" value="1"/>
</dbReference>
<dbReference type="FunFam" id="3.30.200.20:FF:000002">
    <property type="entry name" value="Calcium/calmodulin-dependent protein kinase type II subunit delta isoform 2"/>
    <property type="match status" value="1"/>
</dbReference>
<dbReference type="FunFam" id="3.10.450.50:FF:000001">
    <property type="entry name" value="calcium/calmodulin-dependent protein kinase type II subunit gamma isoform X1"/>
    <property type="match status" value="1"/>
</dbReference>
<dbReference type="Gene3D" id="3.10.450.50">
    <property type="match status" value="1"/>
</dbReference>
<dbReference type="Gene3D" id="6.10.140.620">
    <property type="match status" value="1"/>
</dbReference>
<dbReference type="Gene3D" id="3.30.200.20">
    <property type="entry name" value="Phosphorylase Kinase, domain 1"/>
    <property type="match status" value="1"/>
</dbReference>
<dbReference type="Gene3D" id="1.10.510.10">
    <property type="entry name" value="Transferase(Phosphotransferase) domain 1"/>
    <property type="match status" value="1"/>
</dbReference>
<dbReference type="InterPro" id="IPR013543">
    <property type="entry name" value="Ca/CaM-dep_prot_kinase-assoc"/>
</dbReference>
<dbReference type="InterPro" id="IPR011009">
    <property type="entry name" value="Kinase-like_dom_sf"/>
</dbReference>
<dbReference type="InterPro" id="IPR032710">
    <property type="entry name" value="NTF2-like_dom_sf"/>
</dbReference>
<dbReference type="InterPro" id="IPR000719">
    <property type="entry name" value="Prot_kinase_dom"/>
</dbReference>
<dbReference type="InterPro" id="IPR017441">
    <property type="entry name" value="Protein_kinase_ATP_BS"/>
</dbReference>
<dbReference type="InterPro" id="IPR008271">
    <property type="entry name" value="Ser/Thr_kinase_AS"/>
</dbReference>
<dbReference type="PANTHER" id="PTHR24347">
    <property type="entry name" value="SERINE/THREONINE-PROTEIN KINASE"/>
    <property type="match status" value="1"/>
</dbReference>
<dbReference type="Pfam" id="PF08332">
    <property type="entry name" value="CaMKII_AD"/>
    <property type="match status" value="1"/>
</dbReference>
<dbReference type="Pfam" id="PF00069">
    <property type="entry name" value="Pkinase"/>
    <property type="match status" value="1"/>
</dbReference>
<dbReference type="SMART" id="SM00220">
    <property type="entry name" value="S_TKc"/>
    <property type="match status" value="1"/>
</dbReference>
<dbReference type="SUPFAM" id="SSF54427">
    <property type="entry name" value="NTF2-like"/>
    <property type="match status" value="1"/>
</dbReference>
<dbReference type="SUPFAM" id="SSF56112">
    <property type="entry name" value="Protein kinase-like (PK-like)"/>
    <property type="match status" value="1"/>
</dbReference>
<dbReference type="PROSITE" id="PS00107">
    <property type="entry name" value="PROTEIN_KINASE_ATP"/>
    <property type="match status" value="1"/>
</dbReference>
<dbReference type="PROSITE" id="PS50011">
    <property type="entry name" value="PROTEIN_KINASE_DOM"/>
    <property type="match status" value="1"/>
</dbReference>
<dbReference type="PROSITE" id="PS00108">
    <property type="entry name" value="PROTEIN_KINASE_ST"/>
    <property type="match status" value="1"/>
</dbReference>
<evidence type="ECO:0000250" key="1"/>
<evidence type="ECO:0000250" key="2">
    <source>
        <dbReference type="UniProtKB" id="Q13557"/>
    </source>
</evidence>
<evidence type="ECO:0000255" key="3">
    <source>
        <dbReference type="PROSITE-ProRule" id="PRU00159"/>
    </source>
</evidence>
<evidence type="ECO:0000255" key="4">
    <source>
        <dbReference type="PROSITE-ProRule" id="PRU10027"/>
    </source>
</evidence>
<evidence type="ECO:0000269" key="5">
    <source>
    </source>
</evidence>
<evidence type="ECO:0000269" key="6">
    <source>
    </source>
</evidence>
<evidence type="ECO:0000269" key="7">
    <source>
    </source>
</evidence>
<evidence type="ECO:0000269" key="8">
    <source>
    </source>
</evidence>
<evidence type="ECO:0000269" key="9">
    <source>
    </source>
</evidence>
<evidence type="ECO:0000269" key="10">
    <source>
    </source>
</evidence>
<evidence type="ECO:0000269" key="11">
    <source>
    </source>
</evidence>
<evidence type="ECO:0000269" key="12">
    <source>
    </source>
</evidence>
<evidence type="ECO:0000269" key="13">
    <source>
    </source>
</evidence>
<evidence type="ECO:0000303" key="14">
    <source>
    </source>
</evidence>
<evidence type="ECO:0000303" key="15">
    <source ref="2"/>
</evidence>
<evidence type="ECO:0000305" key="16"/>
<evidence type="ECO:0007744" key="17">
    <source>
    </source>
</evidence>
<evidence type="ECO:0007744" key="18">
    <source>
    </source>
</evidence>
<evidence type="ECO:0007744" key="19">
    <source>
    </source>
</evidence>
<evidence type="ECO:0007829" key="20">
    <source>
        <dbReference type="PDB" id="6BAB"/>
    </source>
</evidence>
<proteinExistence type="evidence at protein level"/>
<reference key="1">
    <citation type="journal article" date="2005" name="Science">
        <title>The transcriptional landscape of the mammalian genome.</title>
        <authorList>
            <person name="Carninci P."/>
            <person name="Kasukawa T."/>
            <person name="Katayama S."/>
            <person name="Gough J."/>
            <person name="Frith M.C."/>
            <person name="Maeda N."/>
            <person name="Oyama R."/>
            <person name="Ravasi T."/>
            <person name="Lenhard B."/>
            <person name="Wells C."/>
            <person name="Kodzius R."/>
            <person name="Shimokawa K."/>
            <person name="Bajic V.B."/>
            <person name="Brenner S.E."/>
            <person name="Batalov S."/>
            <person name="Forrest A.R."/>
            <person name="Zavolan M."/>
            <person name="Davis M.J."/>
            <person name="Wilming L.G."/>
            <person name="Aidinis V."/>
            <person name="Allen J.E."/>
            <person name="Ambesi-Impiombato A."/>
            <person name="Apweiler R."/>
            <person name="Aturaliya R.N."/>
            <person name="Bailey T.L."/>
            <person name="Bansal M."/>
            <person name="Baxter L."/>
            <person name="Beisel K.W."/>
            <person name="Bersano T."/>
            <person name="Bono H."/>
            <person name="Chalk A.M."/>
            <person name="Chiu K.P."/>
            <person name="Choudhary V."/>
            <person name="Christoffels A."/>
            <person name="Clutterbuck D.R."/>
            <person name="Crowe M.L."/>
            <person name="Dalla E."/>
            <person name="Dalrymple B.P."/>
            <person name="de Bono B."/>
            <person name="Della Gatta G."/>
            <person name="di Bernardo D."/>
            <person name="Down T."/>
            <person name="Engstrom P."/>
            <person name="Fagiolini M."/>
            <person name="Faulkner G."/>
            <person name="Fletcher C.F."/>
            <person name="Fukushima T."/>
            <person name="Furuno M."/>
            <person name="Futaki S."/>
            <person name="Gariboldi M."/>
            <person name="Georgii-Hemming P."/>
            <person name="Gingeras T.R."/>
            <person name="Gojobori T."/>
            <person name="Green R.E."/>
            <person name="Gustincich S."/>
            <person name="Harbers M."/>
            <person name="Hayashi Y."/>
            <person name="Hensch T.K."/>
            <person name="Hirokawa N."/>
            <person name="Hill D."/>
            <person name="Huminiecki L."/>
            <person name="Iacono M."/>
            <person name="Ikeo K."/>
            <person name="Iwama A."/>
            <person name="Ishikawa T."/>
            <person name="Jakt M."/>
            <person name="Kanapin A."/>
            <person name="Katoh M."/>
            <person name="Kawasawa Y."/>
            <person name="Kelso J."/>
            <person name="Kitamura H."/>
            <person name="Kitano H."/>
            <person name="Kollias G."/>
            <person name="Krishnan S.P."/>
            <person name="Kruger A."/>
            <person name="Kummerfeld S.K."/>
            <person name="Kurochkin I.V."/>
            <person name="Lareau L.F."/>
            <person name="Lazarevic D."/>
            <person name="Lipovich L."/>
            <person name="Liu J."/>
            <person name="Liuni S."/>
            <person name="McWilliam S."/>
            <person name="Madan Babu M."/>
            <person name="Madera M."/>
            <person name="Marchionni L."/>
            <person name="Matsuda H."/>
            <person name="Matsuzawa S."/>
            <person name="Miki H."/>
            <person name="Mignone F."/>
            <person name="Miyake S."/>
            <person name="Morris K."/>
            <person name="Mottagui-Tabar S."/>
            <person name="Mulder N."/>
            <person name="Nakano N."/>
            <person name="Nakauchi H."/>
            <person name="Ng P."/>
            <person name="Nilsson R."/>
            <person name="Nishiguchi S."/>
            <person name="Nishikawa S."/>
            <person name="Nori F."/>
            <person name="Ohara O."/>
            <person name="Okazaki Y."/>
            <person name="Orlando V."/>
            <person name="Pang K.C."/>
            <person name="Pavan W.J."/>
            <person name="Pavesi G."/>
            <person name="Pesole G."/>
            <person name="Petrovsky N."/>
            <person name="Piazza S."/>
            <person name="Reed J."/>
            <person name="Reid J.F."/>
            <person name="Ring B.Z."/>
            <person name="Ringwald M."/>
            <person name="Rost B."/>
            <person name="Ruan Y."/>
            <person name="Salzberg S.L."/>
            <person name="Sandelin A."/>
            <person name="Schneider C."/>
            <person name="Schoenbach C."/>
            <person name="Sekiguchi K."/>
            <person name="Semple C.A."/>
            <person name="Seno S."/>
            <person name="Sessa L."/>
            <person name="Sheng Y."/>
            <person name="Shibata Y."/>
            <person name="Shimada H."/>
            <person name="Shimada K."/>
            <person name="Silva D."/>
            <person name="Sinclair B."/>
            <person name="Sperling S."/>
            <person name="Stupka E."/>
            <person name="Sugiura K."/>
            <person name="Sultana R."/>
            <person name="Takenaka Y."/>
            <person name="Taki K."/>
            <person name="Tammoja K."/>
            <person name="Tan S.L."/>
            <person name="Tang S."/>
            <person name="Taylor M.S."/>
            <person name="Tegner J."/>
            <person name="Teichmann S.A."/>
            <person name="Ueda H.R."/>
            <person name="van Nimwegen E."/>
            <person name="Verardo R."/>
            <person name="Wei C.L."/>
            <person name="Yagi K."/>
            <person name="Yamanishi H."/>
            <person name="Zabarovsky E."/>
            <person name="Zhu S."/>
            <person name="Zimmer A."/>
            <person name="Hide W."/>
            <person name="Bult C."/>
            <person name="Grimmond S.M."/>
            <person name="Teasdale R.D."/>
            <person name="Liu E.T."/>
            <person name="Brusic V."/>
            <person name="Quackenbush J."/>
            <person name="Wahlestedt C."/>
            <person name="Mattick J.S."/>
            <person name="Hume D.A."/>
            <person name="Kai C."/>
            <person name="Sasaki D."/>
            <person name="Tomaru Y."/>
            <person name="Fukuda S."/>
            <person name="Kanamori-Katayama M."/>
            <person name="Suzuki M."/>
            <person name="Aoki J."/>
            <person name="Arakawa T."/>
            <person name="Iida J."/>
            <person name="Imamura K."/>
            <person name="Itoh M."/>
            <person name="Kato T."/>
            <person name="Kawaji H."/>
            <person name="Kawagashira N."/>
            <person name="Kawashima T."/>
            <person name="Kojima M."/>
            <person name="Kondo S."/>
            <person name="Konno H."/>
            <person name="Nakano K."/>
            <person name="Ninomiya N."/>
            <person name="Nishio T."/>
            <person name="Okada M."/>
            <person name="Plessy C."/>
            <person name="Shibata K."/>
            <person name="Shiraki T."/>
            <person name="Suzuki S."/>
            <person name="Tagami M."/>
            <person name="Waki K."/>
            <person name="Watahiki A."/>
            <person name="Okamura-Oho Y."/>
            <person name="Suzuki H."/>
            <person name="Kawai J."/>
            <person name="Hayashizaki Y."/>
        </authorList>
    </citation>
    <scope>NUCLEOTIDE SEQUENCE [LARGE SCALE MRNA] (ISOFORMS 2; 3 AND 4)</scope>
    <source>
        <strain>C57BL/6J</strain>
        <tissue>Hypothalamus</tissue>
        <tissue>Stomach</tissue>
        <tissue>Sympathetic ganglion</tissue>
    </source>
</reference>
<reference key="2">
    <citation type="submission" date="2005-02" db="EMBL/GenBank/DDBJ databases">
        <title>Prediction of the coding sequences of mouse homologues of KIAA gene. The complete nucleotide sequences of mouse KIAA-homologous cDNAs identified by screening of terminal sequences of cDNA clones randomly sampled from size-fractionated libraries.</title>
        <authorList>
            <person name="Okazaki N."/>
            <person name="Kikuno R.F."/>
            <person name="Ohara R."/>
            <person name="Inamoto S."/>
            <person name="Nagase T."/>
            <person name="Ohara O."/>
            <person name="Koga H."/>
        </authorList>
    </citation>
    <scope>NUCLEOTIDE SEQUENCE [LARGE SCALE MRNA] (ISOFORM 4)</scope>
    <source>
        <tissue>Fetal brain</tissue>
    </source>
</reference>
<reference key="3">
    <citation type="journal article" date="2004" name="Genome Res.">
        <title>The status, quality, and expansion of the NIH full-length cDNA project: the Mammalian Gene Collection (MGC).</title>
        <authorList>
            <consortium name="The MGC Project Team"/>
        </authorList>
    </citation>
    <scope>NUCLEOTIDE SEQUENCE [LARGE SCALE MRNA] (ISOFORM 1)</scope>
    <source>
        <strain>C3H/He</strain>
        <tissue>Osteoblast</tissue>
    </source>
</reference>
<reference key="4">
    <citation type="journal article" date="2000" name="J. Cell. Biochem.">
        <title>delta-Ca(2+)/calmodulin-dependent protein kinase II expression pattern in adult mouse heart and cardiogenic differentiation of embryonic stem cells.</title>
        <authorList>
            <person name="Hoch B."/>
            <person name="Wobus A.M."/>
            <person name="Krause E.G."/>
            <person name="Karczewski P."/>
        </authorList>
    </citation>
    <scope>TISSUE SPECIFICITY</scope>
</reference>
<reference key="5">
    <citation type="journal article" date="2002" name="Proc. Natl. Acad. Sci. U.S.A.">
        <title>Requirement of Ca2+ and CaMKII for Stat1 Ser-727 phosphorylation in response to IFN-gamma.</title>
        <authorList>
            <person name="Nair J.S."/>
            <person name="DaFonseca C.J."/>
            <person name="Tjernberg A."/>
            <person name="Sun W."/>
            <person name="Darnell J.E. Jr."/>
            <person name="Chait B.T."/>
            <person name="Zhang J.J."/>
        </authorList>
    </citation>
    <scope>FUNCTION</scope>
    <scope>CATALYTIC ACTIVITY</scope>
</reference>
<reference key="6">
    <citation type="journal article" date="2003" name="Circ. Res.">
        <title>The deltaC isoform of CaMKII is activated in cardiac hypertrophy and induces dilated cardiomyopathy and heart failure.</title>
        <authorList>
            <person name="Zhang T."/>
            <person name="Maier L.S."/>
            <person name="Dalton N.D."/>
            <person name="Miyamoto S."/>
            <person name="Ross J. Jr."/>
            <person name="Bers D.M."/>
            <person name="Brown J.H."/>
        </authorList>
    </citation>
    <scope>FUNCTION IN CARDIAC HYPERTROPHY</scope>
</reference>
<reference key="7">
    <citation type="journal article" date="2005" name="Am. J. Physiol.">
        <title>Regulation of Kv4.3 currents by Ca2+/calmodulin-dependent protein kinase II.</title>
        <authorList>
            <person name="Sergeant G.P."/>
            <person name="Ohya S."/>
            <person name="Reihill J.A."/>
            <person name="Perrino B.A."/>
            <person name="Amberg G.C."/>
            <person name="Imaizumi Y."/>
            <person name="Horowitz B."/>
            <person name="Sanders K.M."/>
            <person name="Koh S.D."/>
        </authorList>
    </citation>
    <scope>FUNCTION IN PHOSPHORYLATION OF POTASSIUM CHANNEL</scope>
</reference>
<reference key="8">
    <citation type="journal article" date="2007" name="Proc. Natl. Acad. Sci. U.S.A.">
        <title>Large-scale phosphorylation analysis of mouse liver.</title>
        <authorList>
            <person name="Villen J."/>
            <person name="Beausoleil S.A."/>
            <person name="Gerber S.A."/>
            <person name="Gygi S.P."/>
        </authorList>
    </citation>
    <scope>IDENTIFICATION BY MASS SPECTROMETRY [LARGE SCALE ANALYSIS]</scope>
    <source>
        <tissue>Liver</tissue>
    </source>
</reference>
<reference key="9">
    <citation type="journal article" date="2009" name="Mol. Cell. Proteomics">
        <title>Large scale localization of protein phosphorylation by use of electron capture dissociation mass spectrometry.</title>
        <authorList>
            <person name="Sweet S.M."/>
            <person name="Bailey C.M."/>
            <person name="Cunningham D.L."/>
            <person name="Heath J.K."/>
            <person name="Cooper H.J."/>
        </authorList>
    </citation>
    <scope>PHOSPHORYLATION [LARGE SCALE ANALYSIS] AT SER-330 AND THR-337</scope>
    <scope>IDENTIFICATION BY MASS SPECTROMETRY [LARGE SCALE ANALYSIS]</scope>
    <source>
        <tissue>Embryonic fibroblast</tissue>
    </source>
</reference>
<reference key="10">
    <citation type="journal article" date="2010" name="Cell">
        <title>A tissue-specific atlas of mouse protein phosphorylation and expression.</title>
        <authorList>
            <person name="Huttlin E.L."/>
            <person name="Jedrychowski M.P."/>
            <person name="Elias J.E."/>
            <person name="Goswami T."/>
            <person name="Rad R."/>
            <person name="Beausoleil S.A."/>
            <person name="Villen J."/>
            <person name="Haas W."/>
            <person name="Sowa M.E."/>
            <person name="Gygi S.P."/>
        </authorList>
    </citation>
    <scope>PHOSPHORYLATION [LARGE SCALE ANALYSIS] AT SER-333; THR-336; THR-337 AND SER-494</scope>
    <scope>IDENTIFICATION BY MASS SPECTROMETRY [LARGE SCALE ANALYSIS]</scope>
    <source>
        <tissue>Brain</tissue>
        <tissue>Brown adipose tissue</tissue>
        <tissue>Heart</tissue>
        <tissue>Kidney</tissue>
        <tissue>Liver</tissue>
        <tissue>Lung</tissue>
        <tissue>Spleen</tissue>
        <tissue>Testis</tissue>
    </source>
</reference>
<reference key="11">
    <citation type="journal article" date="2013" name="Mol. Cell">
        <title>SIRT5-mediated lysine desuccinylation impacts diverse metabolic pathways.</title>
        <authorList>
            <person name="Park J."/>
            <person name="Chen Y."/>
            <person name="Tishkoff D.X."/>
            <person name="Peng C."/>
            <person name="Tan M."/>
            <person name="Dai L."/>
            <person name="Xie Z."/>
            <person name="Zhang Y."/>
            <person name="Zwaans B.M."/>
            <person name="Skinner M.E."/>
            <person name="Lombard D.B."/>
            <person name="Zhao Y."/>
        </authorList>
    </citation>
    <scope>ACETYLATION [LARGE SCALE ANALYSIS] AT LYS-318</scope>
    <scope>IDENTIFICATION BY MASS SPECTROMETRY [LARGE SCALE ANALYSIS]</scope>
    <source>
        <tissue>Embryonic fibroblast</tissue>
    </source>
</reference>
<reference key="12">
    <citation type="journal article" date="2005" name="Nat. Med.">
        <title>Calmodulin kinase II inhibition protects against structural heart disease.</title>
        <authorList>
            <person name="Zhang R."/>
            <person name="Khoo M.S."/>
            <person name="Wu Y."/>
            <person name="Yang Y."/>
            <person name="Grueter C.E."/>
            <person name="Ni G."/>
            <person name="Price E.E. Jr."/>
            <person name="Thiel W."/>
            <person name="Guatimosim S."/>
            <person name="Song L.S."/>
            <person name="Madu E.C."/>
            <person name="Shah A.N."/>
            <person name="Vishnivetskaya T.A."/>
            <person name="Atkinson J.B."/>
            <person name="Gurevich V.V."/>
            <person name="Salama G."/>
            <person name="Lederer W.J."/>
            <person name="Colbran R.J."/>
            <person name="Anderson M.E."/>
        </authorList>
    </citation>
    <scope>FUNCTION IN MYOCARDIAL REMODELING</scope>
</reference>
<reference key="13">
    <citation type="journal article" date="2006" name="J. Clin. Invest.">
        <title>Ca2+/calmodulin-dependent protein kinase II regulates cardiac Na+ channels.</title>
        <authorList>
            <person name="Wagner S."/>
            <person name="Dybkova N."/>
            <person name="Rasenack E.C."/>
            <person name="Jacobshagen C."/>
            <person name="Fabritz L."/>
            <person name="Kirchhof P."/>
            <person name="Maier S.K."/>
            <person name="Zhang T."/>
            <person name="Hasenfuss G."/>
            <person name="Brown J.H."/>
            <person name="Bers D.M."/>
            <person name="Maier L.S."/>
        </authorList>
    </citation>
    <scope>FUNCTION IN PHOSPHORYLATION OF SODIUM CHANNEL</scope>
</reference>
<reference key="14">
    <citation type="journal article" date="2009" name="J. Clin. Invest.">
        <title>Requirement for Ca2+/calmodulin-dependent kinase II in the transition from pressure overload-induced cardiac hypertrophy to heart failure in mice.</title>
        <authorList>
            <person name="Ling H."/>
            <person name="Zhang T."/>
            <person name="Pereira L."/>
            <person name="Means C.K."/>
            <person name="Cheng H."/>
            <person name="Gu Y."/>
            <person name="Dalton N.D."/>
            <person name="Peterson K.L."/>
            <person name="Chen J."/>
            <person name="Bers D."/>
            <person name="Heller Brown J."/>
        </authorList>
    </citation>
    <scope>FUNCTION IN CARDIAC HYPERTROPHIC CARDIOMYOPATHY</scope>
</reference>
<reference key="15">
    <citation type="journal article" date="2009" name="Proc. Natl. Acad. Sci. U.S.A.">
        <title>The delta isoform of CaM kinase II is required for pathological cardiac hypertrophy and remodeling after pressure overload.</title>
        <authorList>
            <person name="Backs J."/>
            <person name="Backs T."/>
            <person name="Neef S."/>
            <person name="Kreusser M.M."/>
            <person name="Lehmann L.H."/>
            <person name="Patrick D.M."/>
            <person name="Grueter C.E."/>
            <person name="Qi X."/>
            <person name="Richardson J.A."/>
            <person name="Hill J.A."/>
            <person name="Katus H.A."/>
            <person name="Bassel-Duby R."/>
            <person name="Maier L.S."/>
            <person name="Olson E.N."/>
        </authorList>
    </citation>
    <scope>FUNCTION IN CARDIAC HYPERTROPHY AND REMODELING</scope>
</reference>
<reference key="16">
    <citation type="journal article" date="2010" name="Proc. Natl. Acad. Sci. U.S.A.">
        <title>CaV1.2 beta-subunit coordinates CaMKII-triggered cardiomyocyte death and afterdepolarizations.</title>
        <authorList>
            <person name="Koval O.M."/>
            <person name="Guan X."/>
            <person name="Wu Y."/>
            <person name="Joiner M.L."/>
            <person name="Gao Z."/>
            <person name="Chen B."/>
            <person name="Grumbach I.M."/>
            <person name="Luczak E.D."/>
            <person name="Colbran R.J."/>
            <person name="Song L.S."/>
            <person name="Hund T.J."/>
            <person name="Mohler P.J."/>
            <person name="Anderson M.E."/>
        </authorList>
    </citation>
    <scope>FUNCTION IN PHOSPHORYLATION OF L-TYPE CALCIUM CHANNEL</scope>
    <scope>INTERACTION WITH CACNB2</scope>
</reference>
<organism>
    <name type="scientific">Mus musculus</name>
    <name type="common">Mouse</name>
    <dbReference type="NCBI Taxonomy" id="10090"/>
    <lineage>
        <taxon>Eukaryota</taxon>
        <taxon>Metazoa</taxon>
        <taxon>Chordata</taxon>
        <taxon>Craniata</taxon>
        <taxon>Vertebrata</taxon>
        <taxon>Euteleostomi</taxon>
        <taxon>Mammalia</taxon>
        <taxon>Eutheria</taxon>
        <taxon>Euarchontoglires</taxon>
        <taxon>Glires</taxon>
        <taxon>Rodentia</taxon>
        <taxon>Myomorpha</taxon>
        <taxon>Muroidea</taxon>
        <taxon>Muridae</taxon>
        <taxon>Murinae</taxon>
        <taxon>Mus</taxon>
        <taxon>Mus</taxon>
    </lineage>
</organism>
<gene>
    <name type="primary">Camk2d</name>
    <name type="synonym">Kiaa4163</name>
</gene>